<reference key="1">
    <citation type="journal article" date="1997" name="Nature">
        <title>The complete genome sequence of the hyperthermophilic, sulphate-reducing archaeon Archaeoglobus fulgidus.</title>
        <authorList>
            <person name="Klenk H.-P."/>
            <person name="Clayton R.A."/>
            <person name="Tomb J.-F."/>
            <person name="White O."/>
            <person name="Nelson K.E."/>
            <person name="Ketchum K.A."/>
            <person name="Dodson R.J."/>
            <person name="Gwinn M.L."/>
            <person name="Hickey E.K."/>
            <person name="Peterson J.D."/>
            <person name="Richardson D.L."/>
            <person name="Kerlavage A.R."/>
            <person name="Graham D.E."/>
            <person name="Kyrpides N.C."/>
            <person name="Fleischmann R.D."/>
            <person name="Quackenbush J."/>
            <person name="Lee N.H."/>
            <person name="Sutton G.G."/>
            <person name="Gill S.R."/>
            <person name="Kirkness E.F."/>
            <person name="Dougherty B.A."/>
            <person name="McKenney K."/>
            <person name="Adams M.D."/>
            <person name="Loftus B.J."/>
            <person name="Peterson S.N."/>
            <person name="Reich C.I."/>
            <person name="McNeil L.K."/>
            <person name="Badger J.H."/>
            <person name="Glodek A."/>
            <person name="Zhou L."/>
            <person name="Overbeek R."/>
            <person name="Gocayne J.D."/>
            <person name="Weidman J.F."/>
            <person name="McDonald L.A."/>
            <person name="Utterback T.R."/>
            <person name="Cotton M.D."/>
            <person name="Spriggs T."/>
            <person name="Artiach P."/>
            <person name="Kaine B.P."/>
            <person name="Sykes S.M."/>
            <person name="Sadow P.W."/>
            <person name="D'Andrea K.P."/>
            <person name="Bowman C."/>
            <person name="Fujii C."/>
            <person name="Garland S.A."/>
            <person name="Mason T.M."/>
            <person name="Olsen G.J."/>
            <person name="Fraser C.M."/>
            <person name="Smith H.O."/>
            <person name="Woese C.R."/>
            <person name="Venter J.C."/>
        </authorList>
    </citation>
    <scope>NUCLEOTIDE SEQUENCE [LARGE SCALE GENOMIC DNA]</scope>
    <source>
        <strain>ATCC 49558 / DSM 4304 / JCM 9628 / NBRC 100126 / VC-16</strain>
    </source>
</reference>
<name>RL3_ARCFU</name>
<dbReference type="EMBL" id="AE000782">
    <property type="protein sequence ID" value="AAB89331.1"/>
    <property type="molecule type" value="Genomic_DNA"/>
</dbReference>
<dbReference type="PIR" id="D69490">
    <property type="entry name" value="D69490"/>
</dbReference>
<dbReference type="SMR" id="O28354"/>
<dbReference type="STRING" id="224325.AF_1925"/>
<dbReference type="PaxDb" id="224325-AF_1925"/>
<dbReference type="EnsemblBacteria" id="AAB89331">
    <property type="protein sequence ID" value="AAB89331"/>
    <property type="gene ID" value="AF_1925"/>
</dbReference>
<dbReference type="KEGG" id="afu:AF_1925"/>
<dbReference type="eggNOG" id="arCOG04070">
    <property type="taxonomic scope" value="Archaea"/>
</dbReference>
<dbReference type="HOGENOM" id="CLU_033361_2_0_2"/>
<dbReference type="OrthoDB" id="6121at2157"/>
<dbReference type="PhylomeDB" id="O28354"/>
<dbReference type="Proteomes" id="UP000002199">
    <property type="component" value="Chromosome"/>
</dbReference>
<dbReference type="GO" id="GO:0022625">
    <property type="term" value="C:cytosolic large ribosomal subunit"/>
    <property type="evidence" value="ECO:0007669"/>
    <property type="project" value="TreeGrafter"/>
</dbReference>
<dbReference type="GO" id="GO:0019843">
    <property type="term" value="F:rRNA binding"/>
    <property type="evidence" value="ECO:0007669"/>
    <property type="project" value="UniProtKB-UniRule"/>
</dbReference>
<dbReference type="GO" id="GO:0003735">
    <property type="term" value="F:structural constituent of ribosome"/>
    <property type="evidence" value="ECO:0007669"/>
    <property type="project" value="InterPro"/>
</dbReference>
<dbReference type="GO" id="GO:0006412">
    <property type="term" value="P:translation"/>
    <property type="evidence" value="ECO:0007669"/>
    <property type="project" value="UniProtKB-UniRule"/>
</dbReference>
<dbReference type="Gene3D" id="3.30.1430.10">
    <property type="match status" value="1"/>
</dbReference>
<dbReference type="Gene3D" id="4.10.960.10">
    <property type="entry name" value="Ribosomal protein L3, domain 3"/>
    <property type="match status" value="1"/>
</dbReference>
<dbReference type="Gene3D" id="2.40.30.10">
    <property type="entry name" value="Translation factors"/>
    <property type="match status" value="1"/>
</dbReference>
<dbReference type="HAMAP" id="MF_01325_A">
    <property type="entry name" value="Ribosomal_uL3_A"/>
    <property type="match status" value="1"/>
</dbReference>
<dbReference type="InterPro" id="IPR045077">
    <property type="entry name" value="L3_arc_euk"/>
</dbReference>
<dbReference type="InterPro" id="IPR044892">
    <property type="entry name" value="Ribosomal_L3_dom_3_arc_sf"/>
</dbReference>
<dbReference type="InterPro" id="IPR000597">
    <property type="entry name" value="Ribosomal_uL3"/>
</dbReference>
<dbReference type="InterPro" id="IPR019928">
    <property type="entry name" value="Ribosomal_uL3_arc"/>
</dbReference>
<dbReference type="InterPro" id="IPR019926">
    <property type="entry name" value="Ribosomal_uL3_CS"/>
</dbReference>
<dbReference type="InterPro" id="IPR009000">
    <property type="entry name" value="Transl_B-barrel_sf"/>
</dbReference>
<dbReference type="NCBIfam" id="TIGR03626">
    <property type="entry name" value="L3_arch"/>
    <property type="match status" value="1"/>
</dbReference>
<dbReference type="NCBIfam" id="NF003261">
    <property type="entry name" value="PRK04231.1"/>
    <property type="match status" value="1"/>
</dbReference>
<dbReference type="PANTHER" id="PTHR11363">
    <property type="entry name" value="60S RIBOSOMAL PROTEIN L3-RELATED"/>
    <property type="match status" value="1"/>
</dbReference>
<dbReference type="PANTHER" id="PTHR11363:SF5">
    <property type="entry name" value="LARGE RIBOSOMAL SUBUNIT PROTEIN UL3"/>
    <property type="match status" value="1"/>
</dbReference>
<dbReference type="Pfam" id="PF00297">
    <property type="entry name" value="Ribosomal_L3"/>
    <property type="match status" value="1"/>
</dbReference>
<dbReference type="SUPFAM" id="SSF50447">
    <property type="entry name" value="Translation proteins"/>
    <property type="match status" value="1"/>
</dbReference>
<dbReference type="PROSITE" id="PS00474">
    <property type="entry name" value="RIBOSOMAL_L3"/>
    <property type="match status" value="1"/>
</dbReference>
<gene>
    <name evidence="1" type="primary">rpl3</name>
    <name type="ordered locus">AF_1925</name>
</gene>
<accession>O28354</accession>
<evidence type="ECO:0000255" key="1">
    <source>
        <dbReference type="HAMAP-Rule" id="MF_01325"/>
    </source>
</evidence>
<evidence type="ECO:0000305" key="2"/>
<proteinExistence type="inferred from homology"/>
<comment type="function">
    <text evidence="1">One of the primary rRNA binding proteins, it binds directly near the 3'-end of the 23S rRNA, where it nucleates assembly of the 50S subunit.</text>
</comment>
<comment type="subunit">
    <text evidence="1">Part of the 50S ribosomal subunit. Forms a cluster with proteins L14 and L24e.</text>
</comment>
<comment type="similarity">
    <text evidence="1">Belongs to the universal ribosomal protein uL3 family.</text>
</comment>
<keyword id="KW-1185">Reference proteome</keyword>
<keyword id="KW-0687">Ribonucleoprotein</keyword>
<keyword id="KW-0689">Ribosomal protein</keyword>
<keyword id="KW-0694">RNA-binding</keyword>
<keyword id="KW-0699">rRNA-binding</keyword>
<sequence length="331" mass="37223">MKYHRPRRGSLAFSPRKRAKSIVPRIRAWPECDRVRMQGFAGYKAGMTHVVMIDDRKNSPTYGEEVVVPVTVIETPPMKVAAVRVYKKTQYGMQIAAEVWSNNLDDFLDRRLNLPKKEPDVEKLKAAVENGASEVRVVTYTQPYLITGVPKKVPDVMEHRIGGNVEEALDYAISKLGKEISVSEVFDEGAIIDVIAVTKGKGFQGPVKRWGVITLDAKHARSSKHRRVGNLGPWNPHHVRWTVPQAGQMGFHQRTEYNKRLIKIGENGEEITPKGGFLHYGVIRTQYVLVTGSVPGPVKRLIRMRDAIRPPKAHFDGVNIVYVSTTSKQGR</sequence>
<feature type="chain" id="PRO_0000077206" description="Large ribosomal subunit protein uL3">
    <location>
        <begin position="1"/>
        <end position="331"/>
    </location>
</feature>
<organism>
    <name type="scientific">Archaeoglobus fulgidus (strain ATCC 49558 / DSM 4304 / JCM 9628 / NBRC 100126 / VC-16)</name>
    <dbReference type="NCBI Taxonomy" id="224325"/>
    <lineage>
        <taxon>Archaea</taxon>
        <taxon>Methanobacteriati</taxon>
        <taxon>Methanobacteriota</taxon>
        <taxon>Archaeoglobi</taxon>
        <taxon>Archaeoglobales</taxon>
        <taxon>Archaeoglobaceae</taxon>
        <taxon>Archaeoglobus</taxon>
    </lineage>
</organism>
<protein>
    <recommendedName>
        <fullName evidence="1">Large ribosomal subunit protein uL3</fullName>
    </recommendedName>
    <alternativeName>
        <fullName evidence="2">50S ribosomal protein L3</fullName>
    </alternativeName>
</protein>